<comment type="function">
    <text evidence="1">Displays an antiviral effect against flaviviruses in the presence of OAS1B.</text>
</comment>
<comment type="similarity">
    <text evidence="5">Belongs to the ABC transporter superfamily. ABCF family. EF3 subfamily.</text>
</comment>
<comment type="caution">
    <text evidence="5">Lacks transmembrane domains and is probably not involved in transport.</text>
</comment>
<name>ABCF3_PONAB</name>
<accession>Q5R9Z5</accession>
<feature type="initiator methionine" description="Removed" evidence="2">
    <location>
        <position position="1"/>
    </location>
</feature>
<feature type="chain" id="PRO_0000248044" description="ATP-binding cassette sub-family F member 3">
    <location>
        <begin position="2"/>
        <end position="709"/>
    </location>
</feature>
<feature type="domain" description="ABC transporter 1" evidence="3">
    <location>
        <begin position="178"/>
        <end position="424"/>
    </location>
</feature>
<feature type="domain" description="ABC transporter 2" evidence="3">
    <location>
        <begin position="492"/>
        <end position="707"/>
    </location>
</feature>
<feature type="region of interest" description="Disordered" evidence="4">
    <location>
        <begin position="129"/>
        <end position="171"/>
    </location>
</feature>
<feature type="compositionally biased region" description="Basic and acidic residues" evidence="4">
    <location>
        <begin position="129"/>
        <end position="143"/>
    </location>
</feature>
<feature type="compositionally biased region" description="Basic and acidic residues" evidence="4">
    <location>
        <begin position="161"/>
        <end position="171"/>
    </location>
</feature>
<feature type="binding site" evidence="3">
    <location>
        <begin position="210"/>
        <end position="217"/>
    </location>
    <ligand>
        <name>ATP</name>
        <dbReference type="ChEBI" id="CHEBI:30616"/>
        <label>1</label>
    </ligand>
</feature>
<feature type="binding site" evidence="3">
    <location>
        <begin position="525"/>
        <end position="532"/>
    </location>
    <ligand>
        <name>ATP</name>
        <dbReference type="ChEBI" id="CHEBI:30616"/>
        <label>2</label>
    </ligand>
</feature>
<feature type="modified residue" description="N-acetylalanine" evidence="2">
    <location>
        <position position="2"/>
    </location>
</feature>
<feature type="modified residue" description="Phosphoserine" evidence="2">
    <location>
        <position position="83"/>
    </location>
</feature>
<feature type="modified residue" description="Phosphoserine" evidence="2">
    <location>
        <position position="155"/>
    </location>
</feature>
<feature type="modified residue" description="Phosphoserine" evidence="2">
    <location>
        <position position="157"/>
    </location>
</feature>
<feature type="modified residue" description="Phosphoserine" evidence="2">
    <location>
        <position position="161"/>
    </location>
</feature>
<feature type="modified residue" description="Phosphoserine" evidence="2">
    <location>
        <position position="283"/>
    </location>
</feature>
<dbReference type="EMBL" id="CR859235">
    <property type="protein sequence ID" value="CAH91415.1"/>
    <property type="molecule type" value="mRNA"/>
</dbReference>
<dbReference type="RefSeq" id="NP_001125831.1">
    <property type="nucleotide sequence ID" value="NM_001132359.1"/>
</dbReference>
<dbReference type="SMR" id="Q5R9Z5"/>
<dbReference type="FunCoup" id="Q5R9Z5">
    <property type="interactions" value="1381"/>
</dbReference>
<dbReference type="STRING" id="9601.ENSPPYP00000016045"/>
<dbReference type="GeneID" id="100172759"/>
<dbReference type="KEGG" id="pon:100172759"/>
<dbReference type="CTD" id="55324"/>
<dbReference type="eggNOG" id="KOG0062">
    <property type="taxonomic scope" value="Eukaryota"/>
</dbReference>
<dbReference type="InParanoid" id="Q5R9Z5"/>
<dbReference type="OrthoDB" id="2110130at2759"/>
<dbReference type="Proteomes" id="UP000001595">
    <property type="component" value="Unplaced"/>
</dbReference>
<dbReference type="GO" id="GO:0005524">
    <property type="term" value="F:ATP binding"/>
    <property type="evidence" value="ECO:0007669"/>
    <property type="project" value="UniProtKB-KW"/>
</dbReference>
<dbReference type="GO" id="GO:0016887">
    <property type="term" value="F:ATP hydrolysis activity"/>
    <property type="evidence" value="ECO:0007669"/>
    <property type="project" value="InterPro"/>
</dbReference>
<dbReference type="GO" id="GO:0051607">
    <property type="term" value="P:defense response to virus"/>
    <property type="evidence" value="ECO:0007669"/>
    <property type="project" value="UniProtKB-KW"/>
</dbReference>
<dbReference type="CDD" id="cd03221">
    <property type="entry name" value="ABCF_EF-3"/>
    <property type="match status" value="2"/>
</dbReference>
<dbReference type="FunFam" id="3.40.50.300:FF:000104">
    <property type="entry name" value="ATP-binding cassette sub-family F member 3"/>
    <property type="match status" value="1"/>
</dbReference>
<dbReference type="FunFam" id="3.40.50.300:FF:000688">
    <property type="entry name" value="ATP-binding cassette sub-family F member 3"/>
    <property type="match status" value="1"/>
</dbReference>
<dbReference type="Gene3D" id="3.40.50.300">
    <property type="entry name" value="P-loop containing nucleotide triphosphate hydrolases"/>
    <property type="match status" value="2"/>
</dbReference>
<dbReference type="InterPro" id="IPR003593">
    <property type="entry name" value="AAA+_ATPase"/>
</dbReference>
<dbReference type="InterPro" id="IPR032781">
    <property type="entry name" value="ABC_tran_Xtn"/>
</dbReference>
<dbReference type="InterPro" id="IPR003439">
    <property type="entry name" value="ABC_transporter-like_ATP-bd"/>
</dbReference>
<dbReference type="InterPro" id="IPR017871">
    <property type="entry name" value="ABC_transporter-like_CS"/>
</dbReference>
<dbReference type="InterPro" id="IPR050611">
    <property type="entry name" value="ABCF_EF3_subfamily"/>
</dbReference>
<dbReference type="InterPro" id="IPR027417">
    <property type="entry name" value="P-loop_NTPase"/>
</dbReference>
<dbReference type="PANTHER" id="PTHR19211:SF117">
    <property type="entry name" value="ATP-BINDING CASSETTE SUB-FAMILY F MEMBER 3"/>
    <property type="match status" value="1"/>
</dbReference>
<dbReference type="PANTHER" id="PTHR19211">
    <property type="entry name" value="ATP-BINDING TRANSPORT PROTEIN-RELATED"/>
    <property type="match status" value="1"/>
</dbReference>
<dbReference type="Pfam" id="PF00005">
    <property type="entry name" value="ABC_tran"/>
    <property type="match status" value="2"/>
</dbReference>
<dbReference type="Pfam" id="PF12848">
    <property type="entry name" value="ABC_tran_Xtn"/>
    <property type="match status" value="1"/>
</dbReference>
<dbReference type="SMART" id="SM00382">
    <property type="entry name" value="AAA"/>
    <property type="match status" value="2"/>
</dbReference>
<dbReference type="SUPFAM" id="SSF52540">
    <property type="entry name" value="P-loop containing nucleoside triphosphate hydrolases"/>
    <property type="match status" value="2"/>
</dbReference>
<dbReference type="PROSITE" id="PS00211">
    <property type="entry name" value="ABC_TRANSPORTER_1"/>
    <property type="match status" value="2"/>
</dbReference>
<dbReference type="PROSITE" id="PS50893">
    <property type="entry name" value="ABC_TRANSPORTER_2"/>
    <property type="match status" value="2"/>
</dbReference>
<protein>
    <recommendedName>
        <fullName>ATP-binding cassette sub-family F member 3</fullName>
    </recommendedName>
</protein>
<proteinExistence type="evidence at transcript level"/>
<gene>
    <name type="primary">ABCF3</name>
</gene>
<organism>
    <name type="scientific">Pongo abelii</name>
    <name type="common">Sumatran orangutan</name>
    <name type="synonym">Pongo pygmaeus abelii</name>
    <dbReference type="NCBI Taxonomy" id="9601"/>
    <lineage>
        <taxon>Eukaryota</taxon>
        <taxon>Metazoa</taxon>
        <taxon>Chordata</taxon>
        <taxon>Craniata</taxon>
        <taxon>Vertebrata</taxon>
        <taxon>Euteleostomi</taxon>
        <taxon>Mammalia</taxon>
        <taxon>Eutheria</taxon>
        <taxon>Euarchontoglires</taxon>
        <taxon>Primates</taxon>
        <taxon>Haplorrhini</taxon>
        <taxon>Catarrhini</taxon>
        <taxon>Hominidae</taxon>
        <taxon>Pongo</taxon>
    </lineage>
</organism>
<reference key="1">
    <citation type="submission" date="2004-11" db="EMBL/GenBank/DDBJ databases">
        <authorList>
            <consortium name="The German cDNA consortium"/>
        </authorList>
    </citation>
    <scope>NUCLEOTIDE SEQUENCE [LARGE SCALE MRNA]</scope>
    <source>
        <tissue>Brain cortex</tissue>
    </source>
</reference>
<keyword id="KW-0007">Acetylation</keyword>
<keyword id="KW-0051">Antiviral defense</keyword>
<keyword id="KW-0067">ATP-binding</keyword>
<keyword id="KW-0547">Nucleotide-binding</keyword>
<keyword id="KW-0597">Phosphoprotein</keyword>
<keyword id="KW-1185">Reference proteome</keyword>
<keyword id="KW-0677">Repeat</keyword>
<evidence type="ECO:0000250" key="1"/>
<evidence type="ECO:0000250" key="2">
    <source>
        <dbReference type="UniProtKB" id="Q9NUQ8"/>
    </source>
</evidence>
<evidence type="ECO:0000255" key="3">
    <source>
        <dbReference type="PROSITE-ProRule" id="PRU00434"/>
    </source>
</evidence>
<evidence type="ECO:0000256" key="4">
    <source>
        <dbReference type="SAM" id="MobiDB-lite"/>
    </source>
</evidence>
<evidence type="ECO:0000305" key="5"/>
<sequence>MATCAEILRSEFPEIDGQVFDYVTGVLHSGSADFESVDDLVEAVGELLQEVSGDSKDDAGIRAVCQRMYNTLRLAEPQSQGNSQVLLDAPIQLSKITENYDCGTKLPGLLKREQSSTVNAKKLEKAEARLKAKQEKRSEKDTLKTSNPLVLEEASASQAGSRKESRLESSGKNKSYDVRIENFDVSFGDRVLLAGADVNLAWGRRYGLVGRNGLGKTTLLKMLATRSLRVPAHISLLHVEQEVAEDDTPALQSVLESDSVREDLLRRERELSAHIAAGRVEGSEAAELAEIYAKLEEIEADKAPARASVILAGLGFTPKMQQQPTREFSGGWRMRLALARALFARPDLLLLDEPTNMLDVRAILWLENYLQTWPSTILVVSHDRNFLNAIAADIIHLHSQRLDGYRGDFETFIKSKQERLLNQQREYEAQQQYRQHIQVFIDRFRYNANRASQVQSKLKMLEKLPELKPVDKESEVVMKFPDGFEKFSPPILQLDEVDFYYDPKHVIFSRLSVSADLESRICVVGENGAGKSTMLKLLLGDLAPVRGIRHAHRNLKIGYFSQHHVEQLDLNVSAVELLARKFPGRPEEEYRHQLGRYGISGELAMRPVASLSGGQKSRVAFAQMTMPCPNFYILDEPTNHLDMETIEALGRALNNFRGGVILVSHDERFIRLVCRELWVCEGGGVTRVEGGFDQYRALLQEQFRREGFL</sequence>